<name>LET99_CAEEL</name>
<keyword id="KW-0131">Cell cycle</keyword>
<keyword id="KW-0132">Cell division</keyword>
<keyword id="KW-0963">Cytoplasm</keyword>
<keyword id="KW-0217">Developmental protein</keyword>
<keyword id="KW-0498">Mitosis</keyword>
<keyword id="KW-1185">Reference proteome</keyword>
<dbReference type="EMBL" id="Z77666">
    <property type="protein sequence ID" value="CAB01225.1"/>
    <property type="molecule type" value="Genomic_DNA"/>
</dbReference>
<dbReference type="PIR" id="T23469">
    <property type="entry name" value="T23469"/>
</dbReference>
<dbReference type="RefSeq" id="NP_502407.1">
    <property type="nucleotide sequence ID" value="NM_070006.4"/>
</dbReference>
<dbReference type="BioGRID" id="43302">
    <property type="interactions" value="7"/>
</dbReference>
<dbReference type="FunCoup" id="Q21341">
    <property type="interactions" value="1365"/>
</dbReference>
<dbReference type="IntAct" id="Q21341">
    <property type="interactions" value="3"/>
</dbReference>
<dbReference type="STRING" id="6239.K08E7.3.1"/>
<dbReference type="iPTMnet" id="Q21341"/>
<dbReference type="PaxDb" id="6239-K08E7.3"/>
<dbReference type="PeptideAtlas" id="Q21341"/>
<dbReference type="EnsemblMetazoa" id="K08E7.3.1">
    <property type="protein sequence ID" value="K08E7.3.1"/>
    <property type="gene ID" value="WBGene00002368"/>
</dbReference>
<dbReference type="GeneID" id="178210"/>
<dbReference type="KEGG" id="cel:CELE_K08E7.3"/>
<dbReference type="UCSC" id="K08E7.3">
    <property type="organism name" value="c. elegans"/>
</dbReference>
<dbReference type="AGR" id="WB:WBGene00002368"/>
<dbReference type="CTD" id="178210"/>
<dbReference type="WormBase" id="K08E7.3">
    <property type="protein sequence ID" value="CE06147"/>
    <property type="gene ID" value="WBGene00002368"/>
    <property type="gene designation" value="let-99"/>
</dbReference>
<dbReference type="eggNOG" id="ENOG502RT6V">
    <property type="taxonomic scope" value="Eukaryota"/>
</dbReference>
<dbReference type="GeneTree" id="ENSGT00950000182976"/>
<dbReference type="HOGENOM" id="CLU_393910_0_0_1"/>
<dbReference type="InParanoid" id="Q21341"/>
<dbReference type="OMA" id="WLPFFKS"/>
<dbReference type="OrthoDB" id="524326at2759"/>
<dbReference type="Reactome" id="R-CEL-8980692">
    <property type="pathway name" value="RHOA GTPase cycle"/>
</dbReference>
<dbReference type="Reactome" id="R-CEL-9013026">
    <property type="pathway name" value="RHOB GTPase cycle"/>
</dbReference>
<dbReference type="Reactome" id="R-CEL-9013148">
    <property type="pathway name" value="CDC42 GTPase cycle"/>
</dbReference>
<dbReference type="Reactome" id="R-CEL-9013149">
    <property type="pathway name" value="RAC1 GTPase cycle"/>
</dbReference>
<dbReference type="Reactome" id="R-CEL-9013404">
    <property type="pathway name" value="RAC2 GTPase cycle"/>
</dbReference>
<dbReference type="Reactome" id="R-CEL-9013405">
    <property type="pathway name" value="RHOD GTPase cycle"/>
</dbReference>
<dbReference type="Reactome" id="R-CEL-9013406">
    <property type="pathway name" value="RHOQ GTPase cycle"/>
</dbReference>
<dbReference type="Reactome" id="R-CEL-9013408">
    <property type="pathway name" value="RHOG GTPase cycle"/>
</dbReference>
<dbReference type="Reactome" id="R-CEL-9013409">
    <property type="pathway name" value="RHOJ GTPase cycle"/>
</dbReference>
<dbReference type="Reactome" id="R-CEL-9013420">
    <property type="pathway name" value="RHOU GTPase cycle"/>
</dbReference>
<dbReference type="Reactome" id="R-CEL-9013423">
    <property type="pathway name" value="RAC3 GTPase cycle"/>
</dbReference>
<dbReference type="Reactome" id="R-CEL-9013424">
    <property type="pathway name" value="RHOV GTPase cycle"/>
</dbReference>
<dbReference type="Reactome" id="R-CEL-9035034">
    <property type="pathway name" value="RHOF GTPase cycle"/>
</dbReference>
<dbReference type="SignaLink" id="Q21341"/>
<dbReference type="PRO" id="PR:Q21341"/>
<dbReference type="Proteomes" id="UP000001940">
    <property type="component" value="Chromosome IV"/>
</dbReference>
<dbReference type="Bgee" id="WBGene00002368">
    <property type="expression patterns" value="Expressed in germ line (C elegans) and 4 other cell types or tissues"/>
</dbReference>
<dbReference type="GO" id="GO:0005938">
    <property type="term" value="C:cell cortex"/>
    <property type="evidence" value="ECO:0000314"/>
    <property type="project" value="WormBase"/>
</dbReference>
<dbReference type="GO" id="GO:0051301">
    <property type="term" value="P:cell division"/>
    <property type="evidence" value="ECO:0007669"/>
    <property type="project" value="UniProtKB-KW"/>
</dbReference>
<dbReference type="GO" id="GO:0000132">
    <property type="term" value="P:establishment of mitotic spindle orientation"/>
    <property type="evidence" value="ECO:0000315"/>
    <property type="project" value="WormBase"/>
</dbReference>
<dbReference type="GO" id="GO:0035556">
    <property type="term" value="P:intracellular signal transduction"/>
    <property type="evidence" value="ECO:0007669"/>
    <property type="project" value="InterPro"/>
</dbReference>
<dbReference type="CDD" id="cd04371">
    <property type="entry name" value="DEP"/>
    <property type="match status" value="1"/>
</dbReference>
<dbReference type="Gene3D" id="1.10.10.10">
    <property type="entry name" value="Winged helix-like DNA-binding domain superfamily/Winged helix DNA-binding domain"/>
    <property type="match status" value="1"/>
</dbReference>
<dbReference type="InterPro" id="IPR000591">
    <property type="entry name" value="DEP_dom"/>
</dbReference>
<dbReference type="InterPro" id="IPR036388">
    <property type="entry name" value="WH-like_DNA-bd_sf"/>
</dbReference>
<dbReference type="InterPro" id="IPR036390">
    <property type="entry name" value="WH_DNA-bd_sf"/>
</dbReference>
<dbReference type="PANTHER" id="PTHR16206">
    <property type="entry name" value="DEP DOMAIN-CONTAINING"/>
    <property type="match status" value="1"/>
</dbReference>
<dbReference type="PANTHER" id="PTHR16206:SF4">
    <property type="entry name" value="PROTEIN LET-99"/>
    <property type="match status" value="1"/>
</dbReference>
<dbReference type="Pfam" id="PF00610">
    <property type="entry name" value="DEP"/>
    <property type="match status" value="1"/>
</dbReference>
<dbReference type="SMART" id="SM00049">
    <property type="entry name" value="DEP"/>
    <property type="match status" value="1"/>
</dbReference>
<dbReference type="SUPFAM" id="SSF46785">
    <property type="entry name" value="Winged helix' DNA-binding domain"/>
    <property type="match status" value="1"/>
</dbReference>
<dbReference type="PROSITE" id="PS50186">
    <property type="entry name" value="DEP"/>
    <property type="match status" value="1"/>
</dbReference>
<reference key="1">
    <citation type="journal article" date="1998" name="Science">
        <title>Genome sequence of the nematode C. elegans: a platform for investigating biology.</title>
        <authorList>
            <consortium name="The C. elegans sequencing consortium"/>
        </authorList>
    </citation>
    <scope>NUCLEOTIDE SEQUENCE [LARGE SCALE GENOMIC DNA]</scope>
    <source>
        <strain>Bristol N2</strain>
    </source>
</reference>
<reference evidence="7" key="2">
    <citation type="journal article" date="1998" name="Development">
        <title>The let-99 gene is required for proper spindle orientation during cleavage of the C. elegans embryo.</title>
        <authorList>
            <person name="Rose L.S."/>
            <person name="Kemphues K."/>
        </authorList>
    </citation>
    <scope>FUNCTION</scope>
    <scope>DEVELOPMENTAL STAGE</scope>
</reference>
<reference key="3">
    <citation type="journal article" date="2000" name="Development">
        <title>MES-1, a protein required for unequal divisions of the germline in early C. elegans embryos, resembles receptor tyrosine kinases and is localized to the boundary between the germline and gut cells.</title>
        <authorList>
            <person name="Berkowitz L.A."/>
            <person name="Strome S."/>
        </authorList>
    </citation>
    <scope>FUNCTION</scope>
    <scope>SUBCELLULAR LOCATION</scope>
</reference>
<reference key="4">
    <citation type="journal article" date="2002" name="Development">
        <title>LET-99 determines spindle position and is asymmetrically enriched in response to PAR polarity cues in C. elegans embryos.</title>
        <authorList>
            <person name="Tsou M.-F.B."/>
            <person name="Hayashi A."/>
            <person name="DeBella L.R."/>
            <person name="McGrath G."/>
            <person name="Rose L.S."/>
        </authorList>
    </citation>
    <scope>FUNCTION</scope>
    <scope>SUBCELLULAR LOCATION</scope>
</reference>
<reference key="5">
    <citation type="journal article" date="2003" name="Development">
        <title>LET-99 opposes Galpha/GPR signaling to generate asymmetry for spindle positioning in response to PAR and MES-1/SRC-1 signaling.</title>
        <authorList>
            <person name="Tsou M.-F.B."/>
            <person name="Hayashi A."/>
            <person name="Rose L.S."/>
        </authorList>
    </citation>
    <scope>FUNCTION</scope>
    <scope>SUBCELLULAR LOCATION</scope>
    <scope>MUTAGENESIS OF LEU-409 AND ARG-515</scope>
</reference>
<organism evidence="8">
    <name type="scientific">Caenorhabditis elegans</name>
    <dbReference type="NCBI Taxonomy" id="6239"/>
    <lineage>
        <taxon>Eukaryota</taxon>
        <taxon>Metazoa</taxon>
        <taxon>Ecdysozoa</taxon>
        <taxon>Nematoda</taxon>
        <taxon>Chromadorea</taxon>
        <taxon>Rhabditida</taxon>
        <taxon>Rhabditina</taxon>
        <taxon>Rhabditomorpha</taxon>
        <taxon>Rhabditoidea</taxon>
        <taxon>Rhabditidae</taxon>
        <taxon>Peloderinae</taxon>
        <taxon>Caenorhabditis</taxon>
    </lineage>
</organism>
<sequence length="698" mass="80085">MSADYSSEKFKATHLFDEILWHFRSNLSLKTNRRGLATAENSFSGKEAVDFLMIEMPRIIPNNVPERDKMQKFLEFMMDMNVISEAFPKKVKQRRPFSESRIYLFMKTLDELKHPKPRSRRSASFSGARKSAKVAQPASPAATMHRPPKARLPRRLSRSNGNIDKAGIDNSSGGVENHGFDDHKDDEIPKKQRTPKILNRSLESICTEEYTEKREVSEMKEKVYDWLPFFKSRRNHTKVNQPTRRSASLDRNHCVLEQEKAEAALRSQKVTTPPIREAPKDVVFMHPQGPLPAVPSRYQNHRTSIAGSNPALLSRGRMYESIMRRSSVVPVADSVQANNECSFWKTELLGRLEQIYDRTLPCEWASKVDGYDIQWNMIEIDHADGIVKSRCQGLQPDYPQTVIQFMDYLVRYPFVTHKKMDTGLEYNVNRIFITLVNRLEDLNAPLQFDECSLIVNLLCKIDSFAAMLDNGPARRWSKVMISSSASSIEEAGLMVDGFSRDLPACGIRASKYRRRALSPFDNRVNLEIQDEKSYEIREQWLIEAIQLVLLSLPTSRRRKLHKFVTFIQSIETNAVFDLADPSNGSSNNREAAIIGLWTGVCSKCRKQQGMLITAVLLANFQSLFAVPVEFIEQVKRLECEEKDRYSGPRYAKITRSRNDWQPPVPDKPQASPAVFKKPLREVACEKTKKGLFTRLLRK</sequence>
<proteinExistence type="evidence at protein level"/>
<gene>
    <name type="primary">let-99</name>
    <name type="ORF">K08E7.3</name>
</gene>
<comment type="function">
    <text evidence="3 4 5 6">Required for the proper orientation of spindles after the establishment of polarity (PubMed:14534135, PubMed:9477332). May play a role in interactions between the astral microtubules and the cortical cytoskeleton (PubMed:9477332). Required for asymmetric forces on nuclei and spindles (PubMed:9477332). Acts downstream of the PAR signaling as an intermediate that transduces polarity information to the machinery that positions the mitotic spindle, possibly by regulating force generation (PubMed:12223405). Regulates gpr-1/2 asymmetric cortical localization during the first embryonic cell divisions (PubMed:14534135). Acts antagonistically to the gpr-1/2 signaling pathway (PubMed:14534135). Regulates mes-1 expression and/or localization pattern during early embryogenesis (PubMed:11003841).</text>
</comment>
<comment type="interaction">
    <interactant intactId="EBI-1811800">
        <id>Q21341</id>
    </interactant>
    <interactant intactId="EBI-1811687">
        <id>Q9TW45</id>
        <label>par-1</label>
    </interactant>
    <organismsDiffer>false</organismsDiffer>
    <experiments>2</experiments>
</comment>
<comment type="subcellular location">
    <subcellularLocation>
        <location evidence="4">Cytoplasm</location>
    </subcellularLocation>
    <subcellularLocation>
        <location evidence="3 4">Cytoplasm</location>
        <location evidence="3 4">Cell cortex</location>
    </subcellularLocation>
    <text evidence="4 5">Enriched at the cell cortex during both meiosis and mitosis (PubMed:12223405). Enriched asymmetrically at the cell cortex in 1-cell embryos (PubMed:14534135). Localizes at the contact site between EMS and P2 in interphase and is excluded from the contact site during prophase (PubMed:14534135).</text>
</comment>
<comment type="developmental stage">
    <text evidence="6">Expressed both maternally and zygotically.</text>
</comment>
<evidence type="ECO:0000255" key="1">
    <source>
        <dbReference type="PROSITE-ProRule" id="PRU00066"/>
    </source>
</evidence>
<evidence type="ECO:0000256" key="2">
    <source>
        <dbReference type="SAM" id="MobiDB-lite"/>
    </source>
</evidence>
<evidence type="ECO:0000269" key="3">
    <source>
    </source>
</evidence>
<evidence type="ECO:0000269" key="4">
    <source>
    </source>
</evidence>
<evidence type="ECO:0000269" key="5">
    <source>
    </source>
</evidence>
<evidence type="ECO:0000269" key="6">
    <source>
    </source>
</evidence>
<evidence type="ECO:0000305" key="7"/>
<evidence type="ECO:0000312" key="8">
    <source>
        <dbReference type="EMBL" id="CAB01225.1"/>
    </source>
</evidence>
<accession>Q21341</accession>
<protein>
    <recommendedName>
        <fullName>Protein let-99</fullName>
    </recommendedName>
    <alternativeName>
        <fullName>Lethal protein 99</fullName>
    </alternativeName>
</protein>
<feature type="chain" id="PRO_0000084408" description="Protein let-99">
    <location>
        <begin position="1"/>
        <end position="698"/>
    </location>
</feature>
<feature type="domain" description="DEP" evidence="1 7">
    <location>
        <begin position="23"/>
        <end position="107"/>
    </location>
</feature>
<feature type="region of interest" description="Disordered" evidence="2">
    <location>
        <begin position="115"/>
        <end position="188"/>
    </location>
</feature>
<feature type="region of interest" description="Disordered" evidence="2">
    <location>
        <begin position="653"/>
        <end position="672"/>
    </location>
</feature>
<feature type="compositionally biased region" description="Basic residues" evidence="2">
    <location>
        <begin position="146"/>
        <end position="157"/>
    </location>
</feature>
<feature type="compositionally biased region" description="Basic and acidic residues" evidence="2">
    <location>
        <begin position="178"/>
        <end position="188"/>
    </location>
</feature>
<feature type="mutagenesis site" description="In or204ts; temperature sensitive mutant. During EMS blastomere cell division, loss of nuclear rotation resulting in the transversal localization of the mitotic spindle; when associated with H-515." evidence="5">
    <original>L</original>
    <variation>H</variation>
    <location>
        <position position="409"/>
    </location>
</feature>
<feature type="mutagenesis site" description="In or204ts; temperature sensitive mutant. During EMS blastomere cell division, loss of nuclear rotation resulting in the transversal localization of the mitotic spindle; when associated with H-409." evidence="5">
    <original>R</original>
    <variation>H</variation>
    <location>
        <position position="515"/>
    </location>
</feature>